<sequence>MQKFDTKTFQGLILTLQDYWARQGCTIIQPLDMEVGAGTSHPMTCLRALGPEPTAVAYVQPSRRPTDGRYGENPNRLQHYYQFQVIIKPSPDNIQELYLGSLKELGMDPTIHDIRFVEDNWENPTLGAWGLGWEVWLNGMEVTQFTYFQQVGGLECKPVTGEITYGLERLAMYIQGVDSVYDLVWSDGPLGKTTYGDVFHQNEVEQSTYNFEYADVDFLFTCFEQYEKEAQSLLALEKPLPLPAYERILKAAHSFNLLDARKAISVTERQRYILRIRTLTKAVAEAYYASREALGFPMCNNKK</sequence>
<comment type="catalytic activity">
    <reaction evidence="1">
        <text>tRNA(Gly) + glycine + ATP = glycyl-tRNA(Gly) + AMP + diphosphate</text>
        <dbReference type="Rhea" id="RHEA:16013"/>
        <dbReference type="Rhea" id="RHEA-COMP:9664"/>
        <dbReference type="Rhea" id="RHEA-COMP:9683"/>
        <dbReference type="ChEBI" id="CHEBI:30616"/>
        <dbReference type="ChEBI" id="CHEBI:33019"/>
        <dbReference type="ChEBI" id="CHEBI:57305"/>
        <dbReference type="ChEBI" id="CHEBI:78442"/>
        <dbReference type="ChEBI" id="CHEBI:78522"/>
        <dbReference type="ChEBI" id="CHEBI:456215"/>
        <dbReference type="EC" id="6.1.1.14"/>
    </reaction>
</comment>
<comment type="subunit">
    <text evidence="1">Tetramer of two alpha and two beta subunits.</text>
</comment>
<comment type="subcellular location">
    <subcellularLocation>
        <location evidence="1">Cytoplasm</location>
    </subcellularLocation>
</comment>
<comment type="similarity">
    <text evidence="1">Belongs to the class-II aminoacyl-tRNA synthetase family.</text>
</comment>
<gene>
    <name evidence="1" type="primary">glyQ</name>
    <name type="ordered locus">ETA_34120</name>
</gene>
<reference key="1">
    <citation type="journal article" date="2008" name="Environ. Microbiol.">
        <title>The genome of Erwinia tasmaniensis strain Et1/99, a non-pathogenic bacterium in the genus Erwinia.</title>
        <authorList>
            <person name="Kube M."/>
            <person name="Migdoll A.M."/>
            <person name="Mueller I."/>
            <person name="Kuhl H."/>
            <person name="Beck A."/>
            <person name="Reinhardt R."/>
            <person name="Geider K."/>
        </authorList>
    </citation>
    <scope>NUCLEOTIDE SEQUENCE [LARGE SCALE GENOMIC DNA]</scope>
    <source>
        <strain>DSM 17950 / CFBP 7177 / CIP 109463 / NCPPB 4357 / Et1/99</strain>
    </source>
</reference>
<proteinExistence type="inferred from homology"/>
<dbReference type="EC" id="6.1.1.14" evidence="1"/>
<dbReference type="EMBL" id="CU468135">
    <property type="protein sequence ID" value="CAO98458.1"/>
    <property type="molecule type" value="Genomic_DNA"/>
</dbReference>
<dbReference type="RefSeq" id="WP_012443081.1">
    <property type="nucleotide sequence ID" value="NC_010694.1"/>
</dbReference>
<dbReference type="SMR" id="B2VCH0"/>
<dbReference type="STRING" id="465817.ETA_34120"/>
<dbReference type="GeneID" id="89474768"/>
<dbReference type="KEGG" id="eta:ETA_34120"/>
<dbReference type="eggNOG" id="COG0752">
    <property type="taxonomic scope" value="Bacteria"/>
</dbReference>
<dbReference type="HOGENOM" id="CLU_057066_1_0_6"/>
<dbReference type="OrthoDB" id="9802183at2"/>
<dbReference type="Proteomes" id="UP000001726">
    <property type="component" value="Chromosome"/>
</dbReference>
<dbReference type="GO" id="GO:0005829">
    <property type="term" value="C:cytosol"/>
    <property type="evidence" value="ECO:0007669"/>
    <property type="project" value="TreeGrafter"/>
</dbReference>
<dbReference type="GO" id="GO:0005524">
    <property type="term" value="F:ATP binding"/>
    <property type="evidence" value="ECO:0007669"/>
    <property type="project" value="UniProtKB-UniRule"/>
</dbReference>
<dbReference type="GO" id="GO:0004820">
    <property type="term" value="F:glycine-tRNA ligase activity"/>
    <property type="evidence" value="ECO:0007669"/>
    <property type="project" value="UniProtKB-UniRule"/>
</dbReference>
<dbReference type="GO" id="GO:0006426">
    <property type="term" value="P:glycyl-tRNA aminoacylation"/>
    <property type="evidence" value="ECO:0007669"/>
    <property type="project" value="UniProtKB-UniRule"/>
</dbReference>
<dbReference type="CDD" id="cd00733">
    <property type="entry name" value="GlyRS_alpha_core"/>
    <property type="match status" value="1"/>
</dbReference>
<dbReference type="FunFam" id="1.20.58.180:FF:000001">
    <property type="entry name" value="Glycine--tRNA ligase alpha subunit"/>
    <property type="match status" value="1"/>
</dbReference>
<dbReference type="FunFam" id="3.30.930.10:FF:000006">
    <property type="entry name" value="Glycine--tRNA ligase alpha subunit"/>
    <property type="match status" value="1"/>
</dbReference>
<dbReference type="Gene3D" id="3.30.930.10">
    <property type="entry name" value="Bira Bifunctional Protein, Domain 2"/>
    <property type="match status" value="1"/>
</dbReference>
<dbReference type="Gene3D" id="1.20.58.180">
    <property type="entry name" value="Class II aaRS and biotin synthetases, domain 2"/>
    <property type="match status" value="1"/>
</dbReference>
<dbReference type="HAMAP" id="MF_00254">
    <property type="entry name" value="Gly_tRNA_synth_alpha"/>
    <property type="match status" value="1"/>
</dbReference>
<dbReference type="InterPro" id="IPR045864">
    <property type="entry name" value="aa-tRNA-synth_II/BPL/LPL"/>
</dbReference>
<dbReference type="InterPro" id="IPR006194">
    <property type="entry name" value="Gly-tRNA-synth_heterodimer"/>
</dbReference>
<dbReference type="InterPro" id="IPR002310">
    <property type="entry name" value="Gly-tRNA_ligase_asu"/>
</dbReference>
<dbReference type="NCBIfam" id="TIGR00388">
    <property type="entry name" value="glyQ"/>
    <property type="match status" value="1"/>
</dbReference>
<dbReference type="NCBIfam" id="NF006827">
    <property type="entry name" value="PRK09348.1"/>
    <property type="match status" value="1"/>
</dbReference>
<dbReference type="PANTHER" id="PTHR30075:SF2">
    <property type="entry name" value="GLYCINE--TRNA LIGASE, CHLOROPLASTIC_MITOCHONDRIAL 2"/>
    <property type="match status" value="1"/>
</dbReference>
<dbReference type="PANTHER" id="PTHR30075">
    <property type="entry name" value="GLYCYL-TRNA SYNTHETASE"/>
    <property type="match status" value="1"/>
</dbReference>
<dbReference type="Pfam" id="PF02091">
    <property type="entry name" value="tRNA-synt_2e"/>
    <property type="match status" value="1"/>
</dbReference>
<dbReference type="PRINTS" id="PR01044">
    <property type="entry name" value="TRNASYNTHGA"/>
</dbReference>
<dbReference type="SUPFAM" id="SSF55681">
    <property type="entry name" value="Class II aaRS and biotin synthetases"/>
    <property type="match status" value="1"/>
</dbReference>
<dbReference type="PROSITE" id="PS50861">
    <property type="entry name" value="AA_TRNA_LIGASE_II_GLYAB"/>
    <property type="match status" value="1"/>
</dbReference>
<keyword id="KW-0030">Aminoacyl-tRNA synthetase</keyword>
<keyword id="KW-0067">ATP-binding</keyword>
<keyword id="KW-0963">Cytoplasm</keyword>
<keyword id="KW-0436">Ligase</keyword>
<keyword id="KW-0547">Nucleotide-binding</keyword>
<keyword id="KW-0648">Protein biosynthesis</keyword>
<keyword id="KW-1185">Reference proteome</keyword>
<organism>
    <name type="scientific">Erwinia tasmaniensis (strain DSM 17950 / CFBP 7177 / CIP 109463 / NCPPB 4357 / Et1/99)</name>
    <dbReference type="NCBI Taxonomy" id="465817"/>
    <lineage>
        <taxon>Bacteria</taxon>
        <taxon>Pseudomonadati</taxon>
        <taxon>Pseudomonadota</taxon>
        <taxon>Gammaproteobacteria</taxon>
        <taxon>Enterobacterales</taxon>
        <taxon>Erwiniaceae</taxon>
        <taxon>Erwinia</taxon>
    </lineage>
</organism>
<protein>
    <recommendedName>
        <fullName evidence="1">Glycine--tRNA ligase alpha subunit</fullName>
        <ecNumber evidence="1">6.1.1.14</ecNumber>
    </recommendedName>
    <alternativeName>
        <fullName evidence="1">Glycyl-tRNA synthetase alpha subunit</fullName>
        <shortName evidence="1">GlyRS</shortName>
    </alternativeName>
</protein>
<evidence type="ECO:0000255" key="1">
    <source>
        <dbReference type="HAMAP-Rule" id="MF_00254"/>
    </source>
</evidence>
<feature type="chain" id="PRO_1000101188" description="Glycine--tRNA ligase alpha subunit">
    <location>
        <begin position="1"/>
        <end position="303"/>
    </location>
</feature>
<accession>B2VCH0</accession>
<name>SYGA_ERWT9</name>